<proteinExistence type="inferred from homology"/>
<reference key="1">
    <citation type="journal article" date="2004" name="Syst. Appl. Microbiol.">
        <title>Klebsiella variicola, a novel species with clinical and plant-associated isolates.</title>
        <authorList>
            <person name="Rosenblueth M."/>
            <person name="Martinez L."/>
            <person name="Silva J."/>
            <person name="Martinez-Romero E."/>
        </authorList>
    </citation>
    <scope>NUCLEOTIDE SEQUENCE [GENOMIC DNA]</scope>
    <source>
        <strain>6A2</strain>
        <strain>801</strain>
        <strain>F2R9</strain>
    </source>
</reference>
<feature type="chain" id="PRO_0000113312" description="Malate dehydrogenase">
    <location>
        <begin position="1" status="less than"/>
        <end position="232" status="greater than"/>
    </location>
</feature>
<feature type="active site" description="Proton acceptor" evidence="1">
    <location>
        <position position="147"/>
    </location>
</feature>
<feature type="binding site" evidence="1">
    <location>
        <position position="4"/>
    </location>
    <ligand>
        <name>NAD(+)</name>
        <dbReference type="ChEBI" id="CHEBI:57540"/>
    </ligand>
</feature>
<feature type="binding site" evidence="2">
    <location>
        <position position="51"/>
    </location>
    <ligand>
        <name>substrate</name>
    </ligand>
</feature>
<feature type="binding site" evidence="2">
    <location>
        <position position="57"/>
    </location>
    <ligand>
        <name>substrate</name>
    </ligand>
</feature>
<feature type="binding site" evidence="1">
    <location>
        <position position="64"/>
    </location>
    <ligand>
        <name>NAD(+)</name>
        <dbReference type="ChEBI" id="CHEBI:57540"/>
    </ligand>
</feature>
<feature type="binding site" evidence="1">
    <location>
        <begin position="87"/>
        <end position="89"/>
    </location>
    <ligand>
        <name>NAD(+)</name>
        <dbReference type="ChEBI" id="CHEBI:57540"/>
    </ligand>
</feature>
<feature type="binding site" evidence="2">
    <location>
        <position position="89"/>
    </location>
    <ligand>
        <name>substrate</name>
    </ligand>
</feature>
<feature type="binding site" evidence="2">
    <location>
        <position position="123"/>
    </location>
    <ligand>
        <name>substrate</name>
    </ligand>
</feature>
<feature type="binding site" evidence="1">
    <location>
        <position position="197"/>
    </location>
    <ligand>
        <name>NAD(+)</name>
        <dbReference type="ChEBI" id="CHEBI:57540"/>
    </ligand>
</feature>
<feature type="non-terminal residue">
    <location>
        <position position="1"/>
    </location>
</feature>
<feature type="non-terminal residue">
    <location>
        <position position="232"/>
    </location>
</feature>
<sequence>SLYDIAPVTPGVAVDLSHIPTDVKIKGFSGEDATPALEGADVVLISAGVARKPGMDRSDLFNVNAGIVKNLVQQIAKTCPQACIGVITNPVNTTVAIAAEVLKKAGVYDKNKLFGVTTLDIIRSNTFVAELKGKSATEVEVPVIGGHSGVTILPLLSQIPGVSFSDQEVADLTKRIQNAGTEVVEAKAGGGSATLSMGQAAARFGLSLVRAMQGEKGVVECAYVEGDGHYAR</sequence>
<keyword id="KW-0520">NAD</keyword>
<keyword id="KW-0560">Oxidoreductase</keyword>
<keyword id="KW-0816">Tricarboxylic acid cycle</keyword>
<name>MDH_KLEVA</name>
<evidence type="ECO:0000250" key="1"/>
<evidence type="ECO:0000255" key="2">
    <source>
        <dbReference type="PROSITE-ProRule" id="PRU10004"/>
    </source>
</evidence>
<evidence type="ECO:0000305" key="3"/>
<accession>P61896</accession>
<dbReference type="EC" id="1.1.1.37"/>
<dbReference type="EMBL" id="AY367377">
    <property type="protein sequence ID" value="AAQ72403.1"/>
    <property type="molecule type" value="Genomic_DNA"/>
</dbReference>
<dbReference type="EMBL" id="AY367378">
    <property type="protein sequence ID" value="AAQ72404.1"/>
    <property type="molecule type" value="Genomic_DNA"/>
</dbReference>
<dbReference type="EMBL" id="AY367379">
    <property type="protein sequence ID" value="AAQ72405.1"/>
    <property type="molecule type" value="Genomic_DNA"/>
</dbReference>
<dbReference type="SMR" id="P61896"/>
<dbReference type="GO" id="GO:0005737">
    <property type="term" value="C:cytoplasm"/>
    <property type="evidence" value="ECO:0007669"/>
    <property type="project" value="TreeGrafter"/>
</dbReference>
<dbReference type="GO" id="GO:0030060">
    <property type="term" value="F:L-malate dehydrogenase (NAD+) activity"/>
    <property type="evidence" value="ECO:0007669"/>
    <property type="project" value="UniProtKB-EC"/>
</dbReference>
<dbReference type="GO" id="GO:0006108">
    <property type="term" value="P:malate metabolic process"/>
    <property type="evidence" value="ECO:0007669"/>
    <property type="project" value="InterPro"/>
</dbReference>
<dbReference type="GO" id="GO:0006099">
    <property type="term" value="P:tricarboxylic acid cycle"/>
    <property type="evidence" value="ECO:0007669"/>
    <property type="project" value="UniProtKB-KW"/>
</dbReference>
<dbReference type="FunFam" id="3.40.50.720:FF:000268">
    <property type="entry name" value="Malate dehydrogenase"/>
    <property type="match status" value="1"/>
</dbReference>
<dbReference type="FunFam" id="3.90.110.10:FF:000001">
    <property type="entry name" value="Malate dehydrogenase"/>
    <property type="match status" value="1"/>
</dbReference>
<dbReference type="Gene3D" id="3.90.110.10">
    <property type="entry name" value="Lactate dehydrogenase/glycoside hydrolase, family 4, C-terminal"/>
    <property type="match status" value="1"/>
</dbReference>
<dbReference type="Gene3D" id="3.40.50.720">
    <property type="entry name" value="NAD(P)-binding Rossmann-like Domain"/>
    <property type="match status" value="1"/>
</dbReference>
<dbReference type="InterPro" id="IPR022383">
    <property type="entry name" value="Lactate/malate_DH_C"/>
</dbReference>
<dbReference type="InterPro" id="IPR001236">
    <property type="entry name" value="Lactate/malate_DH_N"/>
</dbReference>
<dbReference type="InterPro" id="IPR015955">
    <property type="entry name" value="Lactate_DH/Glyco_Ohase_4_C"/>
</dbReference>
<dbReference type="InterPro" id="IPR001252">
    <property type="entry name" value="Malate_DH_AS"/>
</dbReference>
<dbReference type="InterPro" id="IPR010097">
    <property type="entry name" value="Malate_DH_type1"/>
</dbReference>
<dbReference type="InterPro" id="IPR036291">
    <property type="entry name" value="NAD(P)-bd_dom_sf"/>
</dbReference>
<dbReference type="NCBIfam" id="TIGR01772">
    <property type="entry name" value="MDH_euk_gproteo"/>
    <property type="match status" value="1"/>
</dbReference>
<dbReference type="PANTHER" id="PTHR11540">
    <property type="entry name" value="MALATE AND LACTATE DEHYDROGENASE"/>
    <property type="match status" value="1"/>
</dbReference>
<dbReference type="PANTHER" id="PTHR11540:SF16">
    <property type="entry name" value="MALATE DEHYDROGENASE, MITOCHONDRIAL"/>
    <property type="match status" value="1"/>
</dbReference>
<dbReference type="Pfam" id="PF02866">
    <property type="entry name" value="Ldh_1_C"/>
    <property type="match status" value="1"/>
</dbReference>
<dbReference type="Pfam" id="PF00056">
    <property type="entry name" value="Ldh_1_N"/>
    <property type="match status" value="1"/>
</dbReference>
<dbReference type="SUPFAM" id="SSF56327">
    <property type="entry name" value="LDH C-terminal domain-like"/>
    <property type="match status" value="1"/>
</dbReference>
<dbReference type="SUPFAM" id="SSF51735">
    <property type="entry name" value="NAD(P)-binding Rossmann-fold domains"/>
    <property type="match status" value="1"/>
</dbReference>
<dbReference type="PROSITE" id="PS00068">
    <property type="entry name" value="MDH"/>
    <property type="match status" value="1"/>
</dbReference>
<protein>
    <recommendedName>
        <fullName>Malate dehydrogenase</fullName>
        <ecNumber>1.1.1.37</ecNumber>
    </recommendedName>
</protein>
<comment type="function">
    <text evidence="1">Catalyzes the reversible oxidation of malate to oxaloacetate.</text>
</comment>
<comment type="catalytic activity">
    <reaction evidence="2">
        <text>(S)-malate + NAD(+) = oxaloacetate + NADH + H(+)</text>
        <dbReference type="Rhea" id="RHEA:21432"/>
        <dbReference type="ChEBI" id="CHEBI:15378"/>
        <dbReference type="ChEBI" id="CHEBI:15589"/>
        <dbReference type="ChEBI" id="CHEBI:16452"/>
        <dbReference type="ChEBI" id="CHEBI:57540"/>
        <dbReference type="ChEBI" id="CHEBI:57945"/>
        <dbReference type="EC" id="1.1.1.37"/>
    </reaction>
</comment>
<comment type="subunit">
    <text evidence="1">Homodimer.</text>
</comment>
<comment type="similarity">
    <text evidence="3">Belongs to the LDH/MDH superfamily. MDH type 1 family.</text>
</comment>
<organism>
    <name type="scientific">Klebsiella variicola</name>
    <dbReference type="NCBI Taxonomy" id="244366"/>
    <lineage>
        <taxon>Bacteria</taxon>
        <taxon>Pseudomonadati</taxon>
        <taxon>Pseudomonadota</taxon>
        <taxon>Gammaproteobacteria</taxon>
        <taxon>Enterobacterales</taxon>
        <taxon>Enterobacteriaceae</taxon>
        <taxon>Klebsiella/Raoultella group</taxon>
        <taxon>Klebsiella</taxon>
        <taxon>Klebsiella pneumoniae complex</taxon>
    </lineage>
</organism>
<gene>
    <name type="primary">mdh</name>
</gene>